<feature type="chain" id="PRO_0000404592" description="tRNA wybutosine-synthesizing protein 5">
    <location>
        <begin position="1"/>
        <end position="318"/>
    </location>
</feature>
<feature type="domain" description="JmjC" evidence="3">
    <location>
        <begin position="126"/>
        <end position="270"/>
    </location>
</feature>
<feature type="binding site" evidence="1">
    <location>
        <position position="109"/>
    </location>
    <ligand>
        <name>2-oxoglutarate</name>
        <dbReference type="ChEBI" id="CHEBI:16810"/>
    </ligand>
</feature>
<feature type="binding site" evidence="3">
    <location>
        <position position="163"/>
    </location>
    <ligand>
        <name>Fe cation</name>
        <dbReference type="ChEBI" id="CHEBI:24875"/>
        <note>catalytic</note>
    </ligand>
</feature>
<feature type="binding site" evidence="3">
    <location>
        <position position="165"/>
    </location>
    <ligand>
        <name>Fe cation</name>
        <dbReference type="ChEBI" id="CHEBI:24875"/>
        <note>catalytic</note>
    </ligand>
</feature>
<feature type="binding site" evidence="1">
    <location>
        <position position="169"/>
    </location>
    <ligand>
        <name>2-oxoglutarate</name>
        <dbReference type="ChEBI" id="CHEBI:16810"/>
    </ligand>
</feature>
<feature type="binding site" evidence="1">
    <location>
        <position position="178"/>
    </location>
    <ligand>
        <name>2-oxoglutarate</name>
        <dbReference type="ChEBI" id="CHEBI:16810"/>
    </ligand>
</feature>
<feature type="binding site" evidence="3">
    <location>
        <position position="238"/>
    </location>
    <ligand>
        <name>Fe cation</name>
        <dbReference type="ChEBI" id="CHEBI:24875"/>
        <note>catalytic</note>
    </ligand>
</feature>
<reference key="1">
    <citation type="journal article" date="2004" name="Nature">
        <title>Sequence and comparative analysis of the chicken genome provide unique perspectives on vertebrate evolution.</title>
        <authorList>
            <person name="Hillier L.W."/>
            <person name="Miller W."/>
            <person name="Birney E."/>
            <person name="Warren W."/>
            <person name="Hardison R.C."/>
            <person name="Ponting C.P."/>
            <person name="Bork P."/>
            <person name="Burt D.W."/>
            <person name="Groenen M.A.M."/>
            <person name="Delany M.E."/>
            <person name="Dodgson J.B."/>
            <person name="Chinwalla A.T."/>
            <person name="Cliften P.F."/>
            <person name="Clifton S.W."/>
            <person name="Delehaunty K.D."/>
            <person name="Fronick C."/>
            <person name="Fulton R.S."/>
            <person name="Graves T.A."/>
            <person name="Kremitzki C."/>
            <person name="Layman D."/>
            <person name="Magrini V."/>
            <person name="McPherson J.D."/>
            <person name="Miner T.L."/>
            <person name="Minx P."/>
            <person name="Nash W.E."/>
            <person name="Nhan M.N."/>
            <person name="Nelson J.O."/>
            <person name="Oddy L.G."/>
            <person name="Pohl C.S."/>
            <person name="Randall-Maher J."/>
            <person name="Smith S.M."/>
            <person name="Wallis J.W."/>
            <person name="Yang S.-P."/>
            <person name="Romanov M.N."/>
            <person name="Rondelli C.M."/>
            <person name="Paton B."/>
            <person name="Smith J."/>
            <person name="Morrice D."/>
            <person name="Daniels L."/>
            <person name="Tempest H.G."/>
            <person name="Robertson L."/>
            <person name="Masabanda J.S."/>
            <person name="Griffin D.K."/>
            <person name="Vignal A."/>
            <person name="Fillon V."/>
            <person name="Jacobbson L."/>
            <person name="Kerje S."/>
            <person name="Andersson L."/>
            <person name="Crooijmans R.P."/>
            <person name="Aerts J."/>
            <person name="van der Poel J.J."/>
            <person name="Ellegren H."/>
            <person name="Caldwell R.B."/>
            <person name="Hubbard S.J."/>
            <person name="Grafham D.V."/>
            <person name="Kierzek A.M."/>
            <person name="McLaren S.R."/>
            <person name="Overton I.M."/>
            <person name="Arakawa H."/>
            <person name="Beattie K.J."/>
            <person name="Bezzubov Y."/>
            <person name="Boardman P.E."/>
            <person name="Bonfield J.K."/>
            <person name="Croning M.D.R."/>
            <person name="Davies R.M."/>
            <person name="Francis M.D."/>
            <person name="Humphray S.J."/>
            <person name="Scott C.E."/>
            <person name="Taylor R.G."/>
            <person name="Tickle C."/>
            <person name="Brown W.R.A."/>
            <person name="Rogers J."/>
            <person name="Buerstedde J.-M."/>
            <person name="Wilson S.A."/>
            <person name="Stubbs L."/>
            <person name="Ovcharenko I."/>
            <person name="Gordon L."/>
            <person name="Lucas S."/>
            <person name="Miller M.M."/>
            <person name="Inoko H."/>
            <person name="Shiina T."/>
            <person name="Kaufman J."/>
            <person name="Salomonsen J."/>
            <person name="Skjoedt K."/>
            <person name="Wong G.K.-S."/>
            <person name="Wang J."/>
            <person name="Liu B."/>
            <person name="Wang J."/>
            <person name="Yu J."/>
            <person name="Yang H."/>
            <person name="Nefedov M."/>
            <person name="Koriabine M."/>
            <person name="Dejong P.J."/>
            <person name="Goodstadt L."/>
            <person name="Webber C."/>
            <person name="Dickens N.J."/>
            <person name="Letunic I."/>
            <person name="Suyama M."/>
            <person name="Torrents D."/>
            <person name="von Mering C."/>
            <person name="Zdobnov E.M."/>
            <person name="Makova K."/>
            <person name="Nekrutenko A."/>
            <person name="Elnitski L."/>
            <person name="Eswara P."/>
            <person name="King D.C."/>
            <person name="Yang S.-P."/>
            <person name="Tyekucheva S."/>
            <person name="Radakrishnan A."/>
            <person name="Harris R.S."/>
            <person name="Chiaromonte F."/>
            <person name="Taylor J."/>
            <person name="He J."/>
            <person name="Rijnkels M."/>
            <person name="Griffiths-Jones S."/>
            <person name="Ureta-Vidal A."/>
            <person name="Hoffman M.M."/>
            <person name="Severin J."/>
            <person name="Searle S.M.J."/>
            <person name="Law A.S."/>
            <person name="Speed D."/>
            <person name="Waddington D."/>
            <person name="Cheng Z."/>
            <person name="Tuzun E."/>
            <person name="Eichler E."/>
            <person name="Bao Z."/>
            <person name="Flicek P."/>
            <person name="Shteynberg D.D."/>
            <person name="Brent M.R."/>
            <person name="Bye J.M."/>
            <person name="Huckle E.J."/>
            <person name="Chatterji S."/>
            <person name="Dewey C."/>
            <person name="Pachter L."/>
            <person name="Kouranov A."/>
            <person name="Mourelatos Z."/>
            <person name="Hatzigeorgiou A.G."/>
            <person name="Paterson A.H."/>
            <person name="Ivarie R."/>
            <person name="Brandstrom M."/>
            <person name="Axelsson E."/>
            <person name="Backstrom N."/>
            <person name="Berlin S."/>
            <person name="Webster M.T."/>
            <person name="Pourquie O."/>
            <person name="Reymond A."/>
            <person name="Ucla C."/>
            <person name="Antonarakis S.E."/>
            <person name="Long M."/>
            <person name="Emerson J.J."/>
            <person name="Betran E."/>
            <person name="Dupanloup I."/>
            <person name="Kaessmann H."/>
            <person name="Hinrichs A.S."/>
            <person name="Bejerano G."/>
            <person name="Furey T.S."/>
            <person name="Harte R.A."/>
            <person name="Raney B."/>
            <person name="Siepel A."/>
            <person name="Kent W.J."/>
            <person name="Haussler D."/>
            <person name="Eyras E."/>
            <person name="Castelo R."/>
            <person name="Abril J.F."/>
            <person name="Castellano S."/>
            <person name="Camara F."/>
            <person name="Parra G."/>
            <person name="Guigo R."/>
            <person name="Bourque G."/>
            <person name="Tesler G."/>
            <person name="Pevzner P.A."/>
            <person name="Smit A."/>
            <person name="Fulton L.A."/>
            <person name="Mardis E.R."/>
            <person name="Wilson R.K."/>
        </authorList>
    </citation>
    <scope>NUCLEOTIDE SEQUENCE [LARGE SCALE GENOMIC DNA]</scope>
</reference>
<organism>
    <name type="scientific">Gallus gallus</name>
    <name type="common">Chicken</name>
    <dbReference type="NCBI Taxonomy" id="9031"/>
    <lineage>
        <taxon>Eukaryota</taxon>
        <taxon>Metazoa</taxon>
        <taxon>Chordata</taxon>
        <taxon>Craniata</taxon>
        <taxon>Vertebrata</taxon>
        <taxon>Euteleostomi</taxon>
        <taxon>Archelosauria</taxon>
        <taxon>Archosauria</taxon>
        <taxon>Dinosauria</taxon>
        <taxon>Saurischia</taxon>
        <taxon>Theropoda</taxon>
        <taxon>Coelurosauria</taxon>
        <taxon>Aves</taxon>
        <taxon>Neognathae</taxon>
        <taxon>Galloanserae</taxon>
        <taxon>Galliformes</taxon>
        <taxon>Phasianidae</taxon>
        <taxon>Phasianinae</taxon>
        <taxon>Gallus</taxon>
    </lineage>
</organism>
<proteinExistence type="inferred from homology"/>
<comment type="function">
    <text evidence="2">tRNA hydroxylase that acts as a component of the wybutosine biosynthesis pathway. Wybutosine is a hyper modified guanosine with a tricyclic base found at the 3'-position adjacent to the anticodon of eukaryotic phenylalanine tRNA. Catalyzes the hydroxylation of 7-(a-amino-a-carboxypropyl)wyosine (yW-72) into undermodified hydroxywybutosine (OHyW*). OHyW* being further transformed into hydroxywybutosine (OHyW) by LCMT2/TYW4. OHyW is a derivative of wybutosine found in higher eukaryotes.</text>
</comment>
<comment type="catalytic activity">
    <reaction evidence="2">
        <text>7-[(3S)-3-amino-3-carboxypropyl]wyosine(37) in tRNA(Phe) + 2-oxoglutarate + O2 = 7-(2-hydroxy-3-amino-3-carboxypropyl)wyosine(37) in tRNA(Phe) + succinate + CO2</text>
        <dbReference type="Rhea" id="RHEA:37899"/>
        <dbReference type="Rhea" id="RHEA-COMP:10379"/>
        <dbReference type="Rhea" id="RHEA-COMP:11848"/>
        <dbReference type="ChEBI" id="CHEBI:15379"/>
        <dbReference type="ChEBI" id="CHEBI:16526"/>
        <dbReference type="ChEBI" id="CHEBI:16810"/>
        <dbReference type="ChEBI" id="CHEBI:30031"/>
        <dbReference type="ChEBI" id="CHEBI:73543"/>
        <dbReference type="ChEBI" id="CHEBI:73603"/>
        <dbReference type="EC" id="1.14.11.42"/>
    </reaction>
    <physiologicalReaction direction="left-to-right" evidence="2">
        <dbReference type="Rhea" id="RHEA:37900"/>
    </physiologicalReaction>
</comment>
<comment type="cofactor">
    <cofactor evidence="2">
        <name>Fe(2+)</name>
        <dbReference type="ChEBI" id="CHEBI:29033"/>
    </cofactor>
    <text evidence="2">Binds 1 Fe(2+) ion per subunit.</text>
</comment>
<comment type="pathway">
    <text evidence="2">tRNA modification; wybutosine-tRNA(Phe) biosynthesis.</text>
</comment>
<comment type="subunit">
    <text evidence="2">Homodimer.</text>
</comment>
<comment type="similarity">
    <text evidence="4">Belongs to the TYW5 family.</text>
</comment>
<sequence length="318" mass="37244">MEQREQPAVQVPSLDGVTRERFLRDVYPRREPVVLKGMELGPCTTKWTVDYLSQAAGSKEVKIHVSAVPQMDFLSKNFVYRTLPFDVFVRRAAEVKHKDYFLSEDEKYYLRSVGEDVRKDIADIRKQFPVLAEDVQIPEYFEKEQFFSSVFRISSAGLQLWTHYDVMDNFLIQVTGRKRVVLYSPRDVPYLYLSGTKSEVLDVDNPDFEKYPLFAKAKRYQCYLEAGDVLFIPAMWFHNVISEEFGVALNVFWKHLPAECYDKSDTYGNKDPTAASRAIQILDRALKTLEELPEEYRDFYARRMVLRIQEKAYRNDNG</sequence>
<evidence type="ECO:0000250" key="1"/>
<evidence type="ECO:0000250" key="2">
    <source>
        <dbReference type="UniProtKB" id="A2RUC4"/>
    </source>
</evidence>
<evidence type="ECO:0000255" key="3">
    <source>
        <dbReference type="PROSITE-ProRule" id="PRU00538"/>
    </source>
</evidence>
<evidence type="ECO:0000305" key="4"/>
<keyword id="KW-0223">Dioxygenase</keyword>
<keyword id="KW-0408">Iron</keyword>
<keyword id="KW-0479">Metal-binding</keyword>
<keyword id="KW-0560">Oxidoreductase</keyword>
<keyword id="KW-1185">Reference proteome</keyword>
<keyword id="KW-0819">tRNA processing</keyword>
<name>TYW5_CHICK</name>
<dbReference type="EC" id="1.14.11.42" evidence="2"/>
<dbReference type="EMBL" id="AADN02019856">
    <property type="status" value="NOT_ANNOTATED_CDS"/>
    <property type="molecule type" value="Genomic_DNA"/>
</dbReference>
<dbReference type="SMR" id="E1C7T6"/>
<dbReference type="FunCoup" id="E1C7T6">
    <property type="interactions" value="888"/>
</dbReference>
<dbReference type="STRING" id="9031.ENSGALP00000013215"/>
<dbReference type="PaxDb" id="9031-ENSGALP00000013215"/>
<dbReference type="VEuPathDB" id="HostDB:geneid_424065"/>
<dbReference type="eggNOG" id="KOG2132">
    <property type="taxonomic scope" value="Eukaryota"/>
</dbReference>
<dbReference type="InParanoid" id="E1C7T6"/>
<dbReference type="OrthoDB" id="263283at2759"/>
<dbReference type="PhylomeDB" id="E1C7T6"/>
<dbReference type="TreeFam" id="TF332364"/>
<dbReference type="UniPathway" id="UPA00375"/>
<dbReference type="PRO" id="PR:E1C7T6"/>
<dbReference type="Proteomes" id="UP000000539">
    <property type="component" value="Chromosome 7"/>
</dbReference>
<dbReference type="Bgee" id="ENSGALG00000008145">
    <property type="expression patterns" value="Expressed in granulocyte and 13 other cell types or tissues"/>
</dbReference>
<dbReference type="GO" id="GO:0005506">
    <property type="term" value="F:iron ion binding"/>
    <property type="evidence" value="ECO:0000250"/>
    <property type="project" value="UniProtKB"/>
</dbReference>
<dbReference type="GO" id="GO:0042803">
    <property type="term" value="F:protein homodimerization activity"/>
    <property type="evidence" value="ECO:0000250"/>
    <property type="project" value="UniProtKB"/>
</dbReference>
<dbReference type="GO" id="GO:0000049">
    <property type="term" value="F:tRNA binding"/>
    <property type="evidence" value="ECO:0000250"/>
    <property type="project" value="UniProtKB"/>
</dbReference>
<dbReference type="GO" id="GO:0102524">
    <property type="term" value="F:tRNA(Phe) (7-(3-amino-3-carboxypropyl)wyosine37-C2)-hydroxylase activity"/>
    <property type="evidence" value="ECO:0000250"/>
    <property type="project" value="UniProtKB"/>
</dbReference>
<dbReference type="GO" id="GO:0031591">
    <property type="term" value="P:wybutosine biosynthetic process"/>
    <property type="evidence" value="ECO:0000250"/>
    <property type="project" value="UniProtKB"/>
</dbReference>
<dbReference type="FunFam" id="2.60.120.650:FF:000022">
    <property type="entry name" value="tRNA wybutosine-synthesizing protein 5"/>
    <property type="match status" value="1"/>
</dbReference>
<dbReference type="Gene3D" id="6.10.140.1470">
    <property type="match status" value="1"/>
</dbReference>
<dbReference type="Gene3D" id="2.60.120.650">
    <property type="entry name" value="Cupin"/>
    <property type="match status" value="1"/>
</dbReference>
<dbReference type="InterPro" id="IPR041667">
    <property type="entry name" value="Cupin_8"/>
</dbReference>
<dbReference type="InterPro" id="IPR003347">
    <property type="entry name" value="JmjC_dom"/>
</dbReference>
<dbReference type="PANTHER" id="PTHR12461">
    <property type="entry name" value="HYPOXIA-INDUCIBLE FACTOR 1 ALPHA INHIBITOR-RELATED"/>
    <property type="match status" value="1"/>
</dbReference>
<dbReference type="PANTHER" id="PTHR12461:SF104">
    <property type="entry name" value="TRNA WYBUTOSINE-SYNTHESIZING PROTEIN 5"/>
    <property type="match status" value="1"/>
</dbReference>
<dbReference type="Pfam" id="PF13621">
    <property type="entry name" value="Cupin_8"/>
    <property type="match status" value="1"/>
</dbReference>
<dbReference type="SMART" id="SM00558">
    <property type="entry name" value="JmjC"/>
    <property type="match status" value="1"/>
</dbReference>
<dbReference type="SUPFAM" id="SSF51197">
    <property type="entry name" value="Clavaminate synthase-like"/>
    <property type="match status" value="1"/>
</dbReference>
<dbReference type="PROSITE" id="PS51184">
    <property type="entry name" value="JMJC"/>
    <property type="match status" value="1"/>
</dbReference>
<protein>
    <recommendedName>
        <fullName evidence="4">tRNA wybutosine-synthesizing protein 5</fullName>
        <ecNumber evidence="2">1.14.11.42</ecNumber>
    </recommendedName>
    <alternativeName>
        <fullName>tRNA(Phe) (7-(3-amino-3-carboxypropyl)wyosine(37)-C(2))-hydroxylase</fullName>
    </alternativeName>
</protein>
<gene>
    <name type="primary">TYW5</name>
</gene>
<accession>E1C7T6</accession>